<evidence type="ECO:0000255" key="1">
    <source>
        <dbReference type="HAMAP-Rule" id="MF_01810"/>
    </source>
</evidence>
<proteinExistence type="inferred from homology"/>
<feature type="chain" id="PRO_0000124767" description="Membrane protein insertase YidC">
    <location>
        <begin position="1"/>
        <end position="539"/>
    </location>
</feature>
<feature type="transmembrane region" description="Helical" evidence="1">
    <location>
        <begin position="6"/>
        <end position="26"/>
    </location>
</feature>
<feature type="transmembrane region" description="Helical" evidence="1">
    <location>
        <begin position="341"/>
        <end position="361"/>
    </location>
</feature>
<feature type="transmembrane region" description="Helical" evidence="1">
    <location>
        <begin position="416"/>
        <end position="436"/>
    </location>
</feature>
<feature type="transmembrane region" description="Helical" evidence="1">
    <location>
        <begin position="454"/>
        <end position="474"/>
    </location>
</feature>
<feature type="transmembrane region" description="Helical" evidence="1">
    <location>
        <begin position="495"/>
        <end position="515"/>
    </location>
</feature>
<organism>
    <name type="scientific">Vibrio vulnificus (strain CMCP6)</name>
    <dbReference type="NCBI Taxonomy" id="216895"/>
    <lineage>
        <taxon>Bacteria</taxon>
        <taxon>Pseudomonadati</taxon>
        <taxon>Pseudomonadota</taxon>
        <taxon>Gammaproteobacteria</taxon>
        <taxon>Vibrionales</taxon>
        <taxon>Vibrionaceae</taxon>
        <taxon>Vibrio</taxon>
    </lineage>
</organism>
<sequence length="539" mass="60432">MDSQRTLLVLLLALVSFLLFQQWQVAKNPAPQAVEQAQTSSTLPAPSFADELDPAPAQQASAKLITVTTDVLTLSIDTVGGDVVAADLNQYSAELNSANAFELLRDTQGHQFIAQSGLVGPQGIDLSSNNRPSYQVSADSFTLADDQNELRIPMTYQANGLEYTKTFILKRGSYAIDVEFDVINKSGNNATLGMYAHLRQNLMDAGGSITMPTYRGGAYSTEDTRYKKYSFEDMQDRNLSLTLTNGQGWAAMIQHYFAAAWIPRNEPGANLYTRVIGNMGDIGVRMPNKTIADGDSAHFTATLWAGPKLQDQMAEVAPNLDLVVDYGWLWFIAKPLHWLLSVIQSFVGNWGVAIICLTFIVRGAMYPLTKAQYTSMAKMRMLQPKLQAMRERIGDDRQRMSQEMMELYKKEKVNPLGGCLPLILQMPIFIALYWALMESVELRHSPFILWIHDLSAQDPYFILPLLMGGSMFLIQKMSPTTVTDPMQQKIMTFMPVMFTFFFLWFPSGLVLYWLVSNIVTLIQQSLIYKALEKKGLHTK</sequence>
<protein>
    <recommendedName>
        <fullName evidence="1">Membrane protein insertase YidC</fullName>
    </recommendedName>
    <alternativeName>
        <fullName evidence="1">Foldase YidC</fullName>
    </alternativeName>
    <alternativeName>
        <fullName evidence="1">Membrane integrase YidC</fullName>
    </alternativeName>
    <alternativeName>
        <fullName evidence="1">Membrane protein YidC</fullName>
    </alternativeName>
</protein>
<dbReference type="EMBL" id="AE016795">
    <property type="protein sequence ID" value="AAO09495.1"/>
    <property type="molecule type" value="Genomic_DNA"/>
</dbReference>
<dbReference type="RefSeq" id="WP_011079041.1">
    <property type="nucleotide sequence ID" value="NC_004459.3"/>
</dbReference>
<dbReference type="SMR" id="Q8DDI2"/>
<dbReference type="KEGG" id="vvu:VV1_1007"/>
<dbReference type="HOGENOM" id="CLU_016535_3_0_6"/>
<dbReference type="Proteomes" id="UP000002275">
    <property type="component" value="Chromosome 1"/>
</dbReference>
<dbReference type="GO" id="GO:0005886">
    <property type="term" value="C:plasma membrane"/>
    <property type="evidence" value="ECO:0007669"/>
    <property type="project" value="UniProtKB-SubCell"/>
</dbReference>
<dbReference type="GO" id="GO:0032977">
    <property type="term" value="F:membrane insertase activity"/>
    <property type="evidence" value="ECO:0007669"/>
    <property type="project" value="InterPro"/>
</dbReference>
<dbReference type="GO" id="GO:0051205">
    <property type="term" value="P:protein insertion into membrane"/>
    <property type="evidence" value="ECO:0007669"/>
    <property type="project" value="TreeGrafter"/>
</dbReference>
<dbReference type="GO" id="GO:0015031">
    <property type="term" value="P:protein transport"/>
    <property type="evidence" value="ECO:0007669"/>
    <property type="project" value="UniProtKB-KW"/>
</dbReference>
<dbReference type="CDD" id="cd20070">
    <property type="entry name" value="5TM_YidC_Alb3"/>
    <property type="match status" value="1"/>
</dbReference>
<dbReference type="CDD" id="cd19961">
    <property type="entry name" value="EcYidC-like_peri"/>
    <property type="match status" value="1"/>
</dbReference>
<dbReference type="Gene3D" id="2.70.98.90">
    <property type="match status" value="1"/>
</dbReference>
<dbReference type="HAMAP" id="MF_01810">
    <property type="entry name" value="YidC_type1"/>
    <property type="match status" value="1"/>
</dbReference>
<dbReference type="InterPro" id="IPR019998">
    <property type="entry name" value="Membr_insert_YidC"/>
</dbReference>
<dbReference type="InterPro" id="IPR028053">
    <property type="entry name" value="Membr_insert_YidC_N"/>
</dbReference>
<dbReference type="InterPro" id="IPR001708">
    <property type="entry name" value="YidC/ALB3/OXA1/COX18"/>
</dbReference>
<dbReference type="InterPro" id="IPR028055">
    <property type="entry name" value="YidC/Oxa/ALB_C"/>
</dbReference>
<dbReference type="InterPro" id="IPR047196">
    <property type="entry name" value="YidC_ALB_C"/>
</dbReference>
<dbReference type="InterPro" id="IPR038221">
    <property type="entry name" value="YidC_periplasmic_sf"/>
</dbReference>
<dbReference type="NCBIfam" id="NF002351">
    <property type="entry name" value="PRK01318.1-1"/>
    <property type="match status" value="1"/>
</dbReference>
<dbReference type="NCBIfam" id="NF002352">
    <property type="entry name" value="PRK01318.1-3"/>
    <property type="match status" value="1"/>
</dbReference>
<dbReference type="NCBIfam" id="TIGR03593">
    <property type="entry name" value="yidC_nterm"/>
    <property type="match status" value="1"/>
</dbReference>
<dbReference type="NCBIfam" id="TIGR03592">
    <property type="entry name" value="yidC_oxa1_cterm"/>
    <property type="match status" value="1"/>
</dbReference>
<dbReference type="PANTHER" id="PTHR12428:SF65">
    <property type="entry name" value="CYTOCHROME C OXIDASE ASSEMBLY PROTEIN COX18, MITOCHONDRIAL"/>
    <property type="match status" value="1"/>
</dbReference>
<dbReference type="PANTHER" id="PTHR12428">
    <property type="entry name" value="OXA1"/>
    <property type="match status" value="1"/>
</dbReference>
<dbReference type="Pfam" id="PF02096">
    <property type="entry name" value="60KD_IMP"/>
    <property type="match status" value="1"/>
</dbReference>
<dbReference type="Pfam" id="PF14849">
    <property type="entry name" value="YidC_periplas"/>
    <property type="match status" value="1"/>
</dbReference>
<dbReference type="PRINTS" id="PR00701">
    <property type="entry name" value="60KDINNERMP"/>
</dbReference>
<dbReference type="PRINTS" id="PR01900">
    <property type="entry name" value="YIDCPROTEIN"/>
</dbReference>
<reference key="1">
    <citation type="submission" date="2002-12" db="EMBL/GenBank/DDBJ databases">
        <title>Complete genome sequence of Vibrio vulnificus CMCP6.</title>
        <authorList>
            <person name="Rhee J.H."/>
            <person name="Kim S.Y."/>
            <person name="Chung S.S."/>
            <person name="Kim J.J."/>
            <person name="Moon Y.H."/>
            <person name="Jeong H."/>
            <person name="Choy H.E."/>
        </authorList>
    </citation>
    <scope>NUCLEOTIDE SEQUENCE [LARGE SCALE GENOMIC DNA]</scope>
    <source>
        <strain>CMCP6</strain>
    </source>
</reference>
<keyword id="KW-0997">Cell inner membrane</keyword>
<keyword id="KW-1003">Cell membrane</keyword>
<keyword id="KW-0143">Chaperone</keyword>
<keyword id="KW-0472">Membrane</keyword>
<keyword id="KW-0653">Protein transport</keyword>
<keyword id="KW-0812">Transmembrane</keyword>
<keyword id="KW-1133">Transmembrane helix</keyword>
<keyword id="KW-0813">Transport</keyword>
<comment type="function">
    <text evidence="1">Required for the insertion and/or proper folding and/or complex formation of integral membrane proteins into the membrane. Involved in integration of membrane proteins that insert both dependently and independently of the Sec translocase complex, as well as at least some lipoproteins. Aids folding of multispanning membrane proteins.</text>
</comment>
<comment type="subunit">
    <text evidence="1">Interacts with the Sec translocase complex via SecD. Specifically interacts with transmembrane segments of nascent integral membrane proteins during membrane integration.</text>
</comment>
<comment type="subcellular location">
    <subcellularLocation>
        <location evidence="1">Cell inner membrane</location>
        <topology evidence="1">Multi-pass membrane protein</topology>
    </subcellularLocation>
</comment>
<comment type="similarity">
    <text evidence="1">Belongs to the OXA1/ALB3/YidC family. Type 1 subfamily.</text>
</comment>
<name>YIDC_VIBVU</name>
<gene>
    <name evidence="1" type="primary">yidC</name>
    <name type="ordered locus">VV1_1007</name>
</gene>
<accession>Q8DDI2</accession>